<protein>
    <recommendedName>
        <fullName evidence="1">p-hydroxybenzoic acid efflux pump subunit AaeB</fullName>
        <shortName evidence="1">pHBA efflux pump protein B</shortName>
    </recommendedName>
</protein>
<keyword id="KW-0997">Cell inner membrane</keyword>
<keyword id="KW-1003">Cell membrane</keyword>
<keyword id="KW-0472">Membrane</keyword>
<keyword id="KW-0812">Transmembrane</keyword>
<keyword id="KW-1133">Transmembrane helix</keyword>
<keyword id="KW-0813">Transport</keyword>
<name>AAEB_SALDC</name>
<comment type="function">
    <text evidence="1">Forms an efflux pump with AaeA. Could function as a metabolic relief valve, allowing to eliminate certain compounds when they accumulate to high levels in the cell.</text>
</comment>
<comment type="subcellular location">
    <subcellularLocation>
        <location evidence="1">Cell inner membrane</location>
        <topology evidence="1">Multi-pass membrane protein</topology>
    </subcellularLocation>
</comment>
<comment type="similarity">
    <text evidence="1">Belongs to the aromatic acid exporter ArAE (TC 2.A.85) family.</text>
</comment>
<feature type="chain" id="PRO_1000146741" description="p-hydroxybenzoic acid efflux pump subunit AaeB">
    <location>
        <begin position="1"/>
        <end position="655"/>
    </location>
</feature>
<feature type="transmembrane region" description="Helical" evidence="1">
    <location>
        <begin position="13"/>
        <end position="33"/>
    </location>
</feature>
<feature type="transmembrane region" description="Helical" evidence="1">
    <location>
        <begin position="38"/>
        <end position="58"/>
    </location>
</feature>
<feature type="transmembrane region" description="Helical" evidence="1">
    <location>
        <begin position="69"/>
        <end position="89"/>
    </location>
</feature>
<feature type="transmembrane region" description="Helical" evidence="1">
    <location>
        <begin position="93"/>
        <end position="113"/>
    </location>
</feature>
<feature type="transmembrane region" description="Helical" evidence="1">
    <location>
        <begin position="121"/>
        <end position="141"/>
    </location>
</feature>
<feature type="transmembrane region" description="Helical" evidence="1">
    <location>
        <begin position="152"/>
        <end position="172"/>
    </location>
</feature>
<feature type="transmembrane region" description="Helical" evidence="1">
    <location>
        <begin position="370"/>
        <end position="390"/>
    </location>
</feature>
<feature type="transmembrane region" description="Helical" evidence="1">
    <location>
        <begin position="407"/>
        <end position="427"/>
    </location>
</feature>
<feature type="transmembrane region" description="Helical" evidence="1">
    <location>
        <begin position="431"/>
        <end position="451"/>
    </location>
</feature>
<feature type="transmembrane region" description="Helical" evidence="1">
    <location>
        <begin position="459"/>
        <end position="479"/>
    </location>
</feature>
<feature type="transmembrane region" description="Helical" evidence="1">
    <location>
        <begin position="482"/>
        <end position="502"/>
    </location>
</feature>
<reference key="1">
    <citation type="journal article" date="2011" name="J. Bacteriol.">
        <title>Comparative genomics of 28 Salmonella enterica isolates: evidence for CRISPR-mediated adaptive sublineage evolution.</title>
        <authorList>
            <person name="Fricke W.F."/>
            <person name="Mammel M.K."/>
            <person name="McDermott P.F."/>
            <person name="Tartera C."/>
            <person name="White D.G."/>
            <person name="Leclerc J.E."/>
            <person name="Ravel J."/>
            <person name="Cebula T.A."/>
        </authorList>
    </citation>
    <scope>NUCLEOTIDE SEQUENCE [LARGE SCALE GENOMIC DNA]</scope>
    <source>
        <strain>CT_02021853</strain>
    </source>
</reference>
<proteinExistence type="inferred from homology"/>
<sequence>MGIFSIANQHIRFAVKLACAIVLALFIGFHFQLETPRWAVLTAAIVAAGPAFAAGGEPYSGAIRYRGMLRIIGTFIGCIAALIIIISMIRAPLLMILVCCVWAGFCTWISSLVRIENSYAWGLSGYTALIIVITIQTEPLLTPQFALERCSEIVIGIGCAILADLLFSPRSIKQEVDRELDSLLVAQYQLMQLCIKHGDSEEVDNAWGDLVRRTAALEGMRSNLNMESSRWVRANRRLKALNTLSLTLITQSCETYLIQNTRPELITDTFRELFETPVETVQDVHRQLKRMRRVIVWTGERETPVTLYSWVGAATRYLLLKRGVISNTKISATEEEILQGEPVVKVESAERHHAMVNFWRTTLSCILGTLFWLWTGWTSGNGAMVMIAVVTSLAMRLPNPRMVCIDFIYGTLAALPLGLLYFLVIIPNTQQSMLLLCLSLAVLGFFIGIEVQKRRLGSMGALASTINIIVLDNPMTFHFSQFLDSALGQIVGCMLAFIVILLVRDKSKDRTGRVLLNQFVSAAVSAMTTNVVRRKENRLPALYQQLFLLMNKFPGDLPKFRLALTMIIAHQRLRDAPIPVNEDLSVFHRQLRRTADHVISAGSDDKRRRYFGQLLDELDIYQEKLRIWEAPPQVTEPVKRLTGMLHKYQNALTDS</sequence>
<evidence type="ECO:0000255" key="1">
    <source>
        <dbReference type="HAMAP-Rule" id="MF_01545"/>
    </source>
</evidence>
<accession>B5FIU2</accession>
<organism>
    <name type="scientific">Salmonella dublin (strain CT_02021853)</name>
    <dbReference type="NCBI Taxonomy" id="439851"/>
    <lineage>
        <taxon>Bacteria</taxon>
        <taxon>Pseudomonadati</taxon>
        <taxon>Pseudomonadota</taxon>
        <taxon>Gammaproteobacteria</taxon>
        <taxon>Enterobacterales</taxon>
        <taxon>Enterobacteriaceae</taxon>
        <taxon>Salmonella</taxon>
    </lineage>
</organism>
<gene>
    <name evidence="1" type="primary">aaeB</name>
    <name type="ordered locus">SeD_A3724</name>
</gene>
<dbReference type="EMBL" id="CP001144">
    <property type="protein sequence ID" value="ACH76270.1"/>
    <property type="molecule type" value="Genomic_DNA"/>
</dbReference>
<dbReference type="RefSeq" id="WP_000510913.1">
    <property type="nucleotide sequence ID" value="NC_011205.1"/>
</dbReference>
<dbReference type="SMR" id="B5FIU2"/>
<dbReference type="KEGG" id="sed:SeD_A3724"/>
<dbReference type="HOGENOM" id="CLU_027647_0_0_6"/>
<dbReference type="Proteomes" id="UP000008322">
    <property type="component" value="Chromosome"/>
</dbReference>
<dbReference type="GO" id="GO:0005886">
    <property type="term" value="C:plasma membrane"/>
    <property type="evidence" value="ECO:0007669"/>
    <property type="project" value="UniProtKB-SubCell"/>
</dbReference>
<dbReference type="GO" id="GO:0022857">
    <property type="term" value="F:transmembrane transporter activity"/>
    <property type="evidence" value="ECO:0007669"/>
    <property type="project" value="UniProtKB-UniRule"/>
</dbReference>
<dbReference type="GO" id="GO:0046942">
    <property type="term" value="P:carboxylic acid transport"/>
    <property type="evidence" value="ECO:0007669"/>
    <property type="project" value="InterPro"/>
</dbReference>
<dbReference type="HAMAP" id="MF_01545">
    <property type="entry name" value="AaeB"/>
    <property type="match status" value="1"/>
</dbReference>
<dbReference type="InterPro" id="IPR006726">
    <property type="entry name" value="PHBA_efflux_AaeB/fusaric-R"/>
</dbReference>
<dbReference type="InterPro" id="IPR023706">
    <property type="entry name" value="PHBA_efflux_pump_AaeB"/>
</dbReference>
<dbReference type="NCBIfam" id="NF007916">
    <property type="entry name" value="PRK10631.1"/>
    <property type="match status" value="1"/>
</dbReference>
<dbReference type="PANTHER" id="PTHR30509:SF9">
    <property type="entry name" value="MULTIDRUG RESISTANCE PROTEIN MDTO"/>
    <property type="match status" value="1"/>
</dbReference>
<dbReference type="PANTHER" id="PTHR30509">
    <property type="entry name" value="P-HYDROXYBENZOIC ACID EFFLUX PUMP SUBUNIT-RELATED"/>
    <property type="match status" value="1"/>
</dbReference>
<dbReference type="Pfam" id="PF04632">
    <property type="entry name" value="FUSC"/>
    <property type="match status" value="1"/>
</dbReference>